<feature type="chain" id="PRO_1000095223" description="Aspartyl/glutamyl-tRNA(Asn/Gln) amidotransferase subunit B">
    <location>
        <begin position="1"/>
        <end position="490"/>
    </location>
</feature>
<reference key="1">
    <citation type="submission" date="2008-04" db="EMBL/GenBank/DDBJ databases">
        <title>Complete sequence of chromosome of Methylobacterium populi BJ001.</title>
        <authorList>
            <consortium name="US DOE Joint Genome Institute"/>
            <person name="Copeland A."/>
            <person name="Lucas S."/>
            <person name="Lapidus A."/>
            <person name="Glavina del Rio T."/>
            <person name="Dalin E."/>
            <person name="Tice H."/>
            <person name="Bruce D."/>
            <person name="Goodwin L."/>
            <person name="Pitluck S."/>
            <person name="Chertkov O."/>
            <person name="Brettin T."/>
            <person name="Detter J.C."/>
            <person name="Han C."/>
            <person name="Kuske C.R."/>
            <person name="Schmutz J."/>
            <person name="Larimer F."/>
            <person name="Land M."/>
            <person name="Hauser L."/>
            <person name="Kyrpides N."/>
            <person name="Mikhailova N."/>
            <person name="Marx C."/>
            <person name="Richardson P."/>
        </authorList>
    </citation>
    <scope>NUCLEOTIDE SEQUENCE [LARGE SCALE GENOMIC DNA]</scope>
    <source>
        <strain>ATCC BAA-705 / NCIMB 13946 / BJ001</strain>
    </source>
</reference>
<name>GATB_METPB</name>
<protein>
    <recommendedName>
        <fullName evidence="1">Aspartyl/glutamyl-tRNA(Asn/Gln) amidotransferase subunit B</fullName>
        <shortName evidence="1">Asp/Glu-ADT subunit B</shortName>
        <ecNumber evidence="1">6.3.5.-</ecNumber>
    </recommendedName>
</protein>
<proteinExistence type="inferred from homology"/>
<comment type="function">
    <text evidence="1">Allows the formation of correctly charged Asn-tRNA(Asn) or Gln-tRNA(Gln) through the transamidation of misacylated Asp-tRNA(Asn) or Glu-tRNA(Gln) in organisms which lack either or both of asparaginyl-tRNA or glutaminyl-tRNA synthetases. The reaction takes place in the presence of glutamine and ATP through an activated phospho-Asp-tRNA(Asn) or phospho-Glu-tRNA(Gln).</text>
</comment>
<comment type="catalytic activity">
    <reaction evidence="1">
        <text>L-glutamyl-tRNA(Gln) + L-glutamine + ATP + H2O = L-glutaminyl-tRNA(Gln) + L-glutamate + ADP + phosphate + H(+)</text>
        <dbReference type="Rhea" id="RHEA:17521"/>
        <dbReference type="Rhea" id="RHEA-COMP:9681"/>
        <dbReference type="Rhea" id="RHEA-COMP:9684"/>
        <dbReference type="ChEBI" id="CHEBI:15377"/>
        <dbReference type="ChEBI" id="CHEBI:15378"/>
        <dbReference type="ChEBI" id="CHEBI:29985"/>
        <dbReference type="ChEBI" id="CHEBI:30616"/>
        <dbReference type="ChEBI" id="CHEBI:43474"/>
        <dbReference type="ChEBI" id="CHEBI:58359"/>
        <dbReference type="ChEBI" id="CHEBI:78520"/>
        <dbReference type="ChEBI" id="CHEBI:78521"/>
        <dbReference type="ChEBI" id="CHEBI:456216"/>
    </reaction>
</comment>
<comment type="catalytic activity">
    <reaction evidence="1">
        <text>L-aspartyl-tRNA(Asn) + L-glutamine + ATP + H2O = L-asparaginyl-tRNA(Asn) + L-glutamate + ADP + phosphate + 2 H(+)</text>
        <dbReference type="Rhea" id="RHEA:14513"/>
        <dbReference type="Rhea" id="RHEA-COMP:9674"/>
        <dbReference type="Rhea" id="RHEA-COMP:9677"/>
        <dbReference type="ChEBI" id="CHEBI:15377"/>
        <dbReference type="ChEBI" id="CHEBI:15378"/>
        <dbReference type="ChEBI" id="CHEBI:29985"/>
        <dbReference type="ChEBI" id="CHEBI:30616"/>
        <dbReference type="ChEBI" id="CHEBI:43474"/>
        <dbReference type="ChEBI" id="CHEBI:58359"/>
        <dbReference type="ChEBI" id="CHEBI:78515"/>
        <dbReference type="ChEBI" id="CHEBI:78516"/>
        <dbReference type="ChEBI" id="CHEBI:456216"/>
    </reaction>
</comment>
<comment type="subunit">
    <text evidence="1">Heterotrimer of A, B and C subunits.</text>
</comment>
<comment type="similarity">
    <text evidence="1">Belongs to the GatB/GatE family. GatB subfamily.</text>
</comment>
<sequence length="490" mass="53365">MTERVDPKKLIKGGLHDWEVVIGMEIHAQVTSRSKLFSGASTAFGGEPNDHVSLVDAAMPGMLPVINEECIAQAVRTGLGLKAQINLRSVFDRKNYFYPDLPQGYQISQYKDPIVGEGEVLVDLPDGESITVGIERLHLEQDAGKSLHDQDPTKSFVDLNRSGVALMEIVSRPDLRSSEEAKAYVTKLRTILRYLGTCDGDMEKGSLRADVNVSVRRPGEPLGTRCEIKNVNSIRFIGQAIETEARRQIAILEDGGKIDQETRLFDPGKGETRSMRSKEEAHDYRYFPDPDLLPLEFDQAYVDGLASGLPELPDAKKARFIKDFGLSAYDAGVLVAERASADYFEAVARGRDGKAAANWVINELFGRLNKEGRSIEDTPVSAEQLGTIVDLIGEGVISGKIAKDLFEIVWSEGGDPRAIVESRGMKQVTDTGAIEAAVDAIIAANPDKVEQAKAKPTLLGWFVGQTMKATGGKANPAAVNALLKDKLGIE</sequence>
<evidence type="ECO:0000255" key="1">
    <source>
        <dbReference type="HAMAP-Rule" id="MF_00121"/>
    </source>
</evidence>
<gene>
    <name evidence="1" type="primary">gatB</name>
    <name type="ordered locus">Mpop_3262</name>
</gene>
<keyword id="KW-0067">ATP-binding</keyword>
<keyword id="KW-0436">Ligase</keyword>
<keyword id="KW-0547">Nucleotide-binding</keyword>
<keyword id="KW-0648">Protein biosynthesis</keyword>
<organism>
    <name type="scientific">Methylorubrum populi (strain ATCC BAA-705 / NCIMB 13946 / BJ001)</name>
    <name type="common">Methylobacterium populi</name>
    <dbReference type="NCBI Taxonomy" id="441620"/>
    <lineage>
        <taxon>Bacteria</taxon>
        <taxon>Pseudomonadati</taxon>
        <taxon>Pseudomonadota</taxon>
        <taxon>Alphaproteobacteria</taxon>
        <taxon>Hyphomicrobiales</taxon>
        <taxon>Methylobacteriaceae</taxon>
        <taxon>Methylorubrum</taxon>
    </lineage>
</organism>
<dbReference type="EC" id="6.3.5.-" evidence="1"/>
<dbReference type="EMBL" id="CP001029">
    <property type="protein sequence ID" value="ACB81413.1"/>
    <property type="molecule type" value="Genomic_DNA"/>
</dbReference>
<dbReference type="RefSeq" id="WP_012455130.1">
    <property type="nucleotide sequence ID" value="NC_010725.1"/>
</dbReference>
<dbReference type="SMR" id="B1ZIK6"/>
<dbReference type="STRING" id="441620.Mpop_3262"/>
<dbReference type="KEGG" id="mpo:Mpop_3262"/>
<dbReference type="eggNOG" id="COG0064">
    <property type="taxonomic scope" value="Bacteria"/>
</dbReference>
<dbReference type="HOGENOM" id="CLU_019240_1_1_5"/>
<dbReference type="OrthoDB" id="9804078at2"/>
<dbReference type="Proteomes" id="UP000007136">
    <property type="component" value="Chromosome"/>
</dbReference>
<dbReference type="GO" id="GO:0050566">
    <property type="term" value="F:asparaginyl-tRNA synthase (glutamine-hydrolyzing) activity"/>
    <property type="evidence" value="ECO:0007669"/>
    <property type="project" value="RHEA"/>
</dbReference>
<dbReference type="GO" id="GO:0005524">
    <property type="term" value="F:ATP binding"/>
    <property type="evidence" value="ECO:0007669"/>
    <property type="project" value="UniProtKB-KW"/>
</dbReference>
<dbReference type="GO" id="GO:0050567">
    <property type="term" value="F:glutaminyl-tRNA synthase (glutamine-hydrolyzing) activity"/>
    <property type="evidence" value="ECO:0007669"/>
    <property type="project" value="UniProtKB-UniRule"/>
</dbReference>
<dbReference type="GO" id="GO:0070681">
    <property type="term" value="P:glutaminyl-tRNAGln biosynthesis via transamidation"/>
    <property type="evidence" value="ECO:0007669"/>
    <property type="project" value="TreeGrafter"/>
</dbReference>
<dbReference type="GO" id="GO:0006412">
    <property type="term" value="P:translation"/>
    <property type="evidence" value="ECO:0007669"/>
    <property type="project" value="UniProtKB-UniRule"/>
</dbReference>
<dbReference type="FunFam" id="1.10.10.410:FF:000001">
    <property type="entry name" value="Aspartyl/glutamyl-tRNA(Asn/Gln) amidotransferase subunit B"/>
    <property type="match status" value="1"/>
</dbReference>
<dbReference type="FunFam" id="1.10.150.380:FF:000001">
    <property type="entry name" value="Aspartyl/glutamyl-tRNA(Asn/Gln) amidotransferase subunit B"/>
    <property type="match status" value="1"/>
</dbReference>
<dbReference type="Gene3D" id="1.10.10.410">
    <property type="match status" value="1"/>
</dbReference>
<dbReference type="Gene3D" id="1.10.150.380">
    <property type="entry name" value="GatB domain, N-terminal subdomain"/>
    <property type="match status" value="1"/>
</dbReference>
<dbReference type="HAMAP" id="MF_00121">
    <property type="entry name" value="GatB"/>
    <property type="match status" value="1"/>
</dbReference>
<dbReference type="InterPro" id="IPR017959">
    <property type="entry name" value="Asn/Gln-tRNA_amidoTrfase_suB/E"/>
</dbReference>
<dbReference type="InterPro" id="IPR006075">
    <property type="entry name" value="Asn/Gln-tRNA_Trfase_suB/E_cat"/>
</dbReference>
<dbReference type="InterPro" id="IPR018027">
    <property type="entry name" value="Asn/Gln_amidotransferase"/>
</dbReference>
<dbReference type="InterPro" id="IPR003789">
    <property type="entry name" value="Asn/Gln_tRNA_amidoTrase-B-like"/>
</dbReference>
<dbReference type="InterPro" id="IPR004413">
    <property type="entry name" value="GatB"/>
</dbReference>
<dbReference type="InterPro" id="IPR042114">
    <property type="entry name" value="GatB_C_1"/>
</dbReference>
<dbReference type="InterPro" id="IPR023168">
    <property type="entry name" value="GatB_Yqey_C_2"/>
</dbReference>
<dbReference type="InterPro" id="IPR017958">
    <property type="entry name" value="Gln-tRNA_amidoTrfase_suB_CS"/>
</dbReference>
<dbReference type="InterPro" id="IPR014746">
    <property type="entry name" value="Gln_synth/guanido_kin_cat_dom"/>
</dbReference>
<dbReference type="NCBIfam" id="TIGR00133">
    <property type="entry name" value="gatB"/>
    <property type="match status" value="1"/>
</dbReference>
<dbReference type="NCBIfam" id="NF004012">
    <property type="entry name" value="PRK05477.1-2"/>
    <property type="match status" value="1"/>
</dbReference>
<dbReference type="NCBIfam" id="NF004014">
    <property type="entry name" value="PRK05477.1-4"/>
    <property type="match status" value="1"/>
</dbReference>
<dbReference type="NCBIfam" id="NF004015">
    <property type="entry name" value="PRK05477.1-5"/>
    <property type="match status" value="1"/>
</dbReference>
<dbReference type="PANTHER" id="PTHR11659">
    <property type="entry name" value="GLUTAMYL-TRNA GLN AMIDOTRANSFERASE SUBUNIT B MITOCHONDRIAL AND PROKARYOTIC PET112-RELATED"/>
    <property type="match status" value="1"/>
</dbReference>
<dbReference type="PANTHER" id="PTHR11659:SF0">
    <property type="entry name" value="GLUTAMYL-TRNA(GLN) AMIDOTRANSFERASE SUBUNIT B, MITOCHONDRIAL"/>
    <property type="match status" value="1"/>
</dbReference>
<dbReference type="Pfam" id="PF02934">
    <property type="entry name" value="GatB_N"/>
    <property type="match status" value="1"/>
</dbReference>
<dbReference type="Pfam" id="PF02637">
    <property type="entry name" value="GatB_Yqey"/>
    <property type="match status" value="1"/>
</dbReference>
<dbReference type="SMART" id="SM00845">
    <property type="entry name" value="GatB_Yqey"/>
    <property type="match status" value="1"/>
</dbReference>
<dbReference type="SUPFAM" id="SSF89095">
    <property type="entry name" value="GatB/YqeY motif"/>
    <property type="match status" value="1"/>
</dbReference>
<dbReference type="SUPFAM" id="SSF55931">
    <property type="entry name" value="Glutamine synthetase/guanido kinase"/>
    <property type="match status" value="1"/>
</dbReference>
<dbReference type="PROSITE" id="PS01234">
    <property type="entry name" value="GATB"/>
    <property type="match status" value="1"/>
</dbReference>
<accession>B1ZIK6</accession>